<protein>
    <recommendedName>
        <fullName evidence="1">DNA-directed RNA polymerase subunit omega</fullName>
        <shortName evidence="1">RNAP omega subunit</shortName>
        <ecNumber evidence="1">2.7.7.6</ecNumber>
    </recommendedName>
    <alternativeName>
        <fullName evidence="1">RNA polymerase omega subunit</fullName>
    </alternativeName>
    <alternativeName>
        <fullName evidence="1">Transcriptase subunit omega</fullName>
    </alternativeName>
</protein>
<feature type="chain" id="PRO_1000121254" description="DNA-directed RNA polymerase subunit omega">
    <location>
        <begin position="1"/>
        <end position="78"/>
    </location>
</feature>
<proteinExistence type="inferred from homology"/>
<comment type="function">
    <text evidence="1">Promotes RNA polymerase assembly. Latches the N- and C-terminal regions of the beta' subunit thereby facilitating its interaction with the beta and alpha subunits.</text>
</comment>
<comment type="catalytic activity">
    <reaction evidence="1">
        <text>RNA(n) + a ribonucleoside 5'-triphosphate = RNA(n+1) + diphosphate</text>
        <dbReference type="Rhea" id="RHEA:21248"/>
        <dbReference type="Rhea" id="RHEA-COMP:14527"/>
        <dbReference type="Rhea" id="RHEA-COMP:17342"/>
        <dbReference type="ChEBI" id="CHEBI:33019"/>
        <dbReference type="ChEBI" id="CHEBI:61557"/>
        <dbReference type="ChEBI" id="CHEBI:140395"/>
        <dbReference type="EC" id="2.7.7.6"/>
    </reaction>
</comment>
<comment type="subunit">
    <text evidence="1">In cyanobacteria the RNAP catalytic core is composed of 2 alpha, 1 beta, 1 beta', 1 gamma and 1 omega subunit. When a sigma factor is associated with the core the holoenzyme is formed, which can initiate transcription.</text>
</comment>
<comment type="similarity">
    <text evidence="1">Belongs to the RNA polymerase subunit omega family.</text>
</comment>
<organism>
    <name type="scientific">Prochlorococcus marinus (strain MIT 9301)</name>
    <dbReference type="NCBI Taxonomy" id="167546"/>
    <lineage>
        <taxon>Bacteria</taxon>
        <taxon>Bacillati</taxon>
        <taxon>Cyanobacteriota</taxon>
        <taxon>Cyanophyceae</taxon>
        <taxon>Synechococcales</taxon>
        <taxon>Prochlorococcaceae</taxon>
        <taxon>Prochlorococcus</taxon>
    </lineage>
</organism>
<keyword id="KW-0240">DNA-directed RNA polymerase</keyword>
<keyword id="KW-0548">Nucleotidyltransferase</keyword>
<keyword id="KW-1185">Reference proteome</keyword>
<keyword id="KW-0804">Transcription</keyword>
<keyword id="KW-0808">Transferase</keyword>
<gene>
    <name evidence="1" type="primary">rpoZ</name>
    <name type="ordered locus">P9301_16211</name>
</gene>
<accession>A3PER9</accession>
<name>RPOZ_PROM0</name>
<dbReference type="EC" id="2.7.7.6" evidence="1"/>
<dbReference type="EMBL" id="CP000576">
    <property type="protein sequence ID" value="ABO18244.1"/>
    <property type="molecule type" value="Genomic_DNA"/>
</dbReference>
<dbReference type="RefSeq" id="WP_011863544.1">
    <property type="nucleotide sequence ID" value="NC_009091.1"/>
</dbReference>
<dbReference type="SMR" id="A3PER9"/>
<dbReference type="STRING" id="167546.P9301_16211"/>
<dbReference type="KEGG" id="pmg:P9301_16211"/>
<dbReference type="eggNOG" id="ENOG5032RMS">
    <property type="taxonomic scope" value="Bacteria"/>
</dbReference>
<dbReference type="HOGENOM" id="CLU_175526_0_0_3"/>
<dbReference type="OrthoDB" id="463386at2"/>
<dbReference type="Proteomes" id="UP000001430">
    <property type="component" value="Chromosome"/>
</dbReference>
<dbReference type="GO" id="GO:0000428">
    <property type="term" value="C:DNA-directed RNA polymerase complex"/>
    <property type="evidence" value="ECO:0007669"/>
    <property type="project" value="UniProtKB-KW"/>
</dbReference>
<dbReference type="GO" id="GO:0003677">
    <property type="term" value="F:DNA binding"/>
    <property type="evidence" value="ECO:0007669"/>
    <property type="project" value="UniProtKB-UniRule"/>
</dbReference>
<dbReference type="GO" id="GO:0003899">
    <property type="term" value="F:DNA-directed RNA polymerase activity"/>
    <property type="evidence" value="ECO:0007669"/>
    <property type="project" value="UniProtKB-UniRule"/>
</dbReference>
<dbReference type="GO" id="GO:0006351">
    <property type="term" value="P:DNA-templated transcription"/>
    <property type="evidence" value="ECO:0007669"/>
    <property type="project" value="UniProtKB-UniRule"/>
</dbReference>
<dbReference type="HAMAP" id="MF_00366">
    <property type="entry name" value="RNApol_bact_RpoZ"/>
    <property type="match status" value="1"/>
</dbReference>
<dbReference type="InterPro" id="IPR003716">
    <property type="entry name" value="DNA-dir_RNA_pol_omega"/>
</dbReference>
<dbReference type="InterPro" id="IPR006110">
    <property type="entry name" value="Pol_omega/Rpo6/RPB6"/>
</dbReference>
<dbReference type="NCBIfam" id="NF001574">
    <property type="entry name" value="PRK00392.2-5"/>
    <property type="match status" value="1"/>
</dbReference>
<dbReference type="Pfam" id="PF01192">
    <property type="entry name" value="RNA_pol_Rpb6"/>
    <property type="match status" value="1"/>
</dbReference>
<evidence type="ECO:0000255" key="1">
    <source>
        <dbReference type="HAMAP-Rule" id="MF_00366"/>
    </source>
</evidence>
<sequence length="78" mass="8879">MNISNNAGIDSNDLAKRGESLIRKSTNRYLTTVRIAFRAKQRRFDDFDGLLEESTIKPVQRSIIELSDEQDQPDLLPG</sequence>
<reference key="1">
    <citation type="journal article" date="2007" name="PLoS Genet.">
        <title>Patterns and implications of gene gain and loss in the evolution of Prochlorococcus.</title>
        <authorList>
            <person name="Kettler G.C."/>
            <person name="Martiny A.C."/>
            <person name="Huang K."/>
            <person name="Zucker J."/>
            <person name="Coleman M.L."/>
            <person name="Rodrigue S."/>
            <person name="Chen F."/>
            <person name="Lapidus A."/>
            <person name="Ferriera S."/>
            <person name="Johnson J."/>
            <person name="Steglich C."/>
            <person name="Church G.M."/>
            <person name="Richardson P."/>
            <person name="Chisholm S.W."/>
        </authorList>
    </citation>
    <scope>NUCLEOTIDE SEQUENCE [LARGE SCALE GENOMIC DNA]</scope>
    <source>
        <strain>MIT 9301</strain>
    </source>
</reference>